<accession>Q66HB3</accession>
<sequence>MRLKISLLKEPKHQELVSCVGWTTAEELYSCSDDHQIVKWNLLTSETSLIVKLPDDIYPIDLHWFPKSLGIKKQTQAESFVLTSSDGKFHLISKLGRVEKSVEAHCGAVLAGRWNYEGTALVTVGEDGQVKIWSKTGMLRSTLAQQGIPVYSVAWGPDSEKVLYTAGKQLIIKPLQPNAKVLQWKAHDGIILKVDWNSVNDLILSAGEDCKYKVWDSYGRVLYGSQPHEHPITSVAWAPDGELFAVGSFHTLRLCDKTGWSYALEKPNTGSIFNIAWSIDGTQIAGACGNGHVVFAHVVEQRWEWKNFQVTLTKRRTMQVRNVLNDAVDLLEFRDRVIKASLNHAHLVVSTSLQCYVFSTKNWNTPLIFDLKEGTVSLILQAERHFLLVDGGGIYLHSYEGRFISSPKFPGMRTDILNAQTVSLSNDTIAIKDKADEKIIFLFEASTGKPLGDGKLLSHKNEISEVALDQKGLTNDRKIAFIDKNRDLYITSVKRFGKEEQIIKLGTMVHTLAWCDTCNILCGLQDTRFTVWYYPNAVYVDRDILPKTLYERDASEYSKNPHIVSFVGNQVTVRRADGSLVHISISPYPAILHEYVSSSKWEDAVRLCRFVKEQSLWACLAAMAVANRDMVTAEIAYAAVGEIDKVRYINAMKDLPSRESKMAHILMFSGNIQEAETILLQAGLVYQAIQININLYNWERALELAVKYKTHVDTVLAYRQKFLETFGKQETNKRYLQYAEGLQIDWEKIKAKIEMEITKERDRSSSGQSSKNTGLKP</sequence>
<reference key="1">
    <citation type="journal article" date="2004" name="Genome Res.">
        <title>The status, quality, and expansion of the NIH full-length cDNA project: the Mammalian Gene Collection (MGC).</title>
        <authorList>
            <consortium name="The MGC Project Team"/>
        </authorList>
    </citation>
    <scope>NUCLEOTIDE SEQUENCE [LARGE SCALE MRNA]</scope>
    <source>
        <tissue>Testis</tissue>
    </source>
</reference>
<gene>
    <name type="primary">Ift80</name>
    <name type="synonym">Wdr56</name>
</gene>
<comment type="function">
    <text evidence="1">Component of the intraflagellar transport (IFT) complex B, which is essential for the development and maintenance of motile and sensory cilia.</text>
</comment>
<comment type="subunit">
    <text evidence="2">Component of the IFT complex B, at least composed of IFT20, IFT22, IFT25, IFT27, IFT46, IFT52, TRAF3IP1/IFT54, IFT57, IFT74, IFT80, IFT81, and IFT88 (By similarity). Interacts with IFT88 (By similarity). Interacts with IFT57 and IFT70B (By similarity).</text>
</comment>
<comment type="subcellular location">
    <subcellularLocation>
        <location>Cytoplasm</location>
    </subcellularLocation>
    <subcellularLocation>
        <location evidence="1">Cytoplasm</location>
        <location evidence="1">Cytoskeleton</location>
        <location evidence="1">Cilium basal body</location>
    </subcellularLocation>
    <subcellularLocation>
        <location evidence="1">Cytoplasm</location>
        <location evidence="1">Cytoskeleton</location>
        <location evidence="1">Cilium axoneme</location>
    </subcellularLocation>
    <text evidence="1">Basal body and ciliary axoneme.</text>
</comment>
<proteinExistence type="evidence at transcript level"/>
<protein>
    <recommendedName>
        <fullName>Intraflagellar transport protein 80 homolog</fullName>
    </recommendedName>
    <alternativeName>
        <fullName>WD repeat-containing protein 56</fullName>
    </alternativeName>
</protein>
<feature type="chain" id="PRO_0000051044" description="Intraflagellar transport protein 80 homolog">
    <location>
        <begin position="1"/>
        <end position="777"/>
    </location>
</feature>
<feature type="repeat" description="WD 1">
    <location>
        <begin position="12"/>
        <end position="50"/>
    </location>
</feature>
<feature type="repeat" description="WD 2">
    <location>
        <begin position="104"/>
        <end position="143"/>
    </location>
</feature>
<feature type="repeat" description="WD 3">
    <location>
        <begin position="145"/>
        <end position="185"/>
    </location>
</feature>
<feature type="repeat" description="WD 4">
    <location>
        <begin position="186"/>
        <end position="225"/>
    </location>
</feature>
<feature type="repeat" description="WD 5">
    <location>
        <begin position="227"/>
        <end position="265"/>
    </location>
</feature>
<feature type="repeat" description="WD 6">
    <location>
        <begin position="267"/>
        <end position="306"/>
    </location>
</feature>
<feature type="repeat" description="WD 7">
    <location>
        <begin position="504"/>
        <end position="542"/>
    </location>
</feature>
<feature type="region of interest" description="Disordered" evidence="3">
    <location>
        <begin position="758"/>
        <end position="777"/>
    </location>
</feature>
<feature type="compositionally biased region" description="Polar residues" evidence="3">
    <location>
        <begin position="765"/>
        <end position="777"/>
    </location>
</feature>
<organism>
    <name type="scientific">Rattus norvegicus</name>
    <name type="common">Rat</name>
    <dbReference type="NCBI Taxonomy" id="10116"/>
    <lineage>
        <taxon>Eukaryota</taxon>
        <taxon>Metazoa</taxon>
        <taxon>Chordata</taxon>
        <taxon>Craniata</taxon>
        <taxon>Vertebrata</taxon>
        <taxon>Euteleostomi</taxon>
        <taxon>Mammalia</taxon>
        <taxon>Eutheria</taxon>
        <taxon>Euarchontoglires</taxon>
        <taxon>Glires</taxon>
        <taxon>Rodentia</taxon>
        <taxon>Myomorpha</taxon>
        <taxon>Muroidea</taxon>
        <taxon>Muridae</taxon>
        <taxon>Murinae</taxon>
        <taxon>Rattus</taxon>
    </lineage>
</organism>
<name>IFT80_RAT</name>
<evidence type="ECO:0000250" key="1"/>
<evidence type="ECO:0000250" key="2">
    <source>
        <dbReference type="UniProtKB" id="Q8K057"/>
    </source>
</evidence>
<evidence type="ECO:0000256" key="3">
    <source>
        <dbReference type="SAM" id="MobiDB-lite"/>
    </source>
</evidence>
<dbReference type="EMBL" id="BC081931">
    <property type="protein sequence ID" value="AAH81931.1"/>
    <property type="molecule type" value="mRNA"/>
</dbReference>
<dbReference type="EMBL" id="BC081937">
    <property type="protein sequence ID" value="AAH81937.1"/>
    <property type="molecule type" value="mRNA"/>
</dbReference>
<dbReference type="RefSeq" id="NP_001013933.1">
    <property type="nucleotide sequence ID" value="NM_001013911.1"/>
</dbReference>
<dbReference type="RefSeq" id="XP_063137661.1">
    <property type="nucleotide sequence ID" value="XM_063281591.1"/>
</dbReference>
<dbReference type="SMR" id="Q66HB3"/>
<dbReference type="FunCoup" id="Q66HB3">
    <property type="interactions" value="2482"/>
</dbReference>
<dbReference type="STRING" id="10116.ENSRNOP00000069823"/>
<dbReference type="PhosphoSitePlus" id="Q66HB3"/>
<dbReference type="PaxDb" id="10116-ENSRNOP00000013216"/>
<dbReference type="Ensembl" id="ENSRNOT00000013216.7">
    <property type="protein sequence ID" value="ENSRNOP00000013216.5"/>
    <property type="gene ID" value="ENSRNOG00000009808.8"/>
</dbReference>
<dbReference type="GeneID" id="295106"/>
<dbReference type="KEGG" id="rno:295106"/>
<dbReference type="UCSC" id="RGD:1312006">
    <property type="organism name" value="rat"/>
</dbReference>
<dbReference type="AGR" id="RGD:1312006"/>
<dbReference type="CTD" id="57560"/>
<dbReference type="RGD" id="1312006">
    <property type="gene designation" value="Ift80"/>
</dbReference>
<dbReference type="eggNOG" id="KOG1524">
    <property type="taxonomic scope" value="Eukaryota"/>
</dbReference>
<dbReference type="GeneTree" id="ENSGT00440000033499"/>
<dbReference type="InParanoid" id="Q66HB3"/>
<dbReference type="OMA" id="WDAQGAN"/>
<dbReference type="OrthoDB" id="408728at2759"/>
<dbReference type="PhylomeDB" id="Q66HB3"/>
<dbReference type="TreeFam" id="TF106117"/>
<dbReference type="Reactome" id="R-RNO-5620924">
    <property type="pathway name" value="Intraflagellar transport"/>
</dbReference>
<dbReference type="PRO" id="PR:Q66HB3"/>
<dbReference type="Proteomes" id="UP000002494">
    <property type="component" value="Chromosome 2"/>
</dbReference>
<dbReference type="Bgee" id="ENSRNOG00000009808">
    <property type="expression patterns" value="Expressed in testis and 18 other cell types or tissues"/>
</dbReference>
<dbReference type="GO" id="GO:0097731">
    <property type="term" value="C:9+0 non-motile cilium"/>
    <property type="evidence" value="ECO:0000266"/>
    <property type="project" value="RGD"/>
</dbReference>
<dbReference type="GO" id="GO:0005813">
    <property type="term" value="C:centrosome"/>
    <property type="evidence" value="ECO:0000266"/>
    <property type="project" value="RGD"/>
</dbReference>
<dbReference type="GO" id="GO:0036064">
    <property type="term" value="C:ciliary basal body"/>
    <property type="evidence" value="ECO:0000266"/>
    <property type="project" value="RGD"/>
</dbReference>
<dbReference type="GO" id="GO:0005929">
    <property type="term" value="C:cilium"/>
    <property type="evidence" value="ECO:0000266"/>
    <property type="project" value="RGD"/>
</dbReference>
<dbReference type="GO" id="GO:0005737">
    <property type="term" value="C:cytoplasm"/>
    <property type="evidence" value="ECO:0007669"/>
    <property type="project" value="UniProtKB-SubCell"/>
</dbReference>
<dbReference type="GO" id="GO:0030992">
    <property type="term" value="C:intraciliary transport particle B"/>
    <property type="evidence" value="ECO:0000250"/>
    <property type="project" value="UniProtKB"/>
</dbReference>
<dbReference type="GO" id="GO:0006915">
    <property type="term" value="P:apoptotic process"/>
    <property type="evidence" value="ECO:0000266"/>
    <property type="project" value="RGD"/>
</dbReference>
<dbReference type="GO" id="GO:0061975">
    <property type="term" value="P:articular cartilage development"/>
    <property type="evidence" value="ECO:0000266"/>
    <property type="project" value="RGD"/>
</dbReference>
<dbReference type="GO" id="GO:0060348">
    <property type="term" value="P:bone development"/>
    <property type="evidence" value="ECO:0000266"/>
    <property type="project" value="RGD"/>
</dbReference>
<dbReference type="GO" id="GO:0035630">
    <property type="term" value="P:bone mineralization involved in bone maturation"/>
    <property type="evidence" value="ECO:0000266"/>
    <property type="project" value="RGD"/>
</dbReference>
<dbReference type="GO" id="GO:0060349">
    <property type="term" value="P:bone morphogenesis"/>
    <property type="evidence" value="ECO:0000266"/>
    <property type="project" value="RGD"/>
</dbReference>
<dbReference type="GO" id="GO:0007249">
    <property type="term" value="P:canonical NF-kappaB signal transduction"/>
    <property type="evidence" value="ECO:0000266"/>
    <property type="project" value="RGD"/>
</dbReference>
<dbReference type="GO" id="GO:0051216">
    <property type="term" value="P:cartilage development"/>
    <property type="evidence" value="ECO:0000266"/>
    <property type="project" value="RGD"/>
</dbReference>
<dbReference type="GO" id="GO:1990079">
    <property type="term" value="P:cartilage homeostasis"/>
    <property type="evidence" value="ECO:0000266"/>
    <property type="project" value="RGD"/>
</dbReference>
<dbReference type="GO" id="GO:0008283">
    <property type="term" value="P:cell population proliferation"/>
    <property type="evidence" value="ECO:0000266"/>
    <property type="project" value="RGD"/>
</dbReference>
<dbReference type="GO" id="GO:0002062">
    <property type="term" value="P:chondrocyte differentiation"/>
    <property type="evidence" value="ECO:0000266"/>
    <property type="project" value="RGD"/>
</dbReference>
<dbReference type="GO" id="GO:0060271">
    <property type="term" value="P:cilium assembly"/>
    <property type="evidence" value="ECO:0000266"/>
    <property type="project" value="RGD"/>
</dbReference>
<dbReference type="GO" id="GO:0044782">
    <property type="term" value="P:cilium organization"/>
    <property type="evidence" value="ECO:0000266"/>
    <property type="project" value="RGD"/>
</dbReference>
<dbReference type="GO" id="GO:0001958">
    <property type="term" value="P:endochondral ossification"/>
    <property type="evidence" value="ECO:0000266"/>
    <property type="project" value="RGD"/>
</dbReference>
<dbReference type="GO" id="GO:0007163">
    <property type="term" value="P:establishment or maintenance of cell polarity"/>
    <property type="evidence" value="ECO:0000266"/>
    <property type="project" value="RGD"/>
</dbReference>
<dbReference type="GO" id="GO:0008543">
    <property type="term" value="P:fibroblast growth factor receptor signaling pathway"/>
    <property type="evidence" value="ECO:0000266"/>
    <property type="project" value="RGD"/>
</dbReference>
<dbReference type="GO" id="GO:0010467">
    <property type="term" value="P:gene expression"/>
    <property type="evidence" value="ECO:0000266"/>
    <property type="project" value="RGD"/>
</dbReference>
<dbReference type="GO" id="GO:0003418">
    <property type="term" value="P:growth plate cartilage chondrocyte differentiation"/>
    <property type="evidence" value="ECO:0000266"/>
    <property type="project" value="RGD"/>
</dbReference>
<dbReference type="GO" id="GO:0003417">
    <property type="term" value="P:growth plate cartilage development"/>
    <property type="evidence" value="ECO:0000266"/>
    <property type="project" value="RGD"/>
</dbReference>
<dbReference type="GO" id="GO:0043616">
    <property type="term" value="P:keratinocyte proliferation"/>
    <property type="evidence" value="ECO:0000266"/>
    <property type="project" value="RGD"/>
</dbReference>
<dbReference type="GO" id="GO:0060173">
    <property type="term" value="P:limb development"/>
    <property type="evidence" value="ECO:0000266"/>
    <property type="project" value="RGD"/>
</dbReference>
<dbReference type="GO" id="GO:0035264">
    <property type="term" value="P:multicellular organism growth"/>
    <property type="evidence" value="ECO:0000266"/>
    <property type="project" value="RGD"/>
</dbReference>
<dbReference type="GO" id="GO:0010839">
    <property type="term" value="P:negative regulation of keratinocyte proliferation"/>
    <property type="evidence" value="ECO:0000266"/>
    <property type="project" value="RGD"/>
</dbReference>
<dbReference type="GO" id="GO:2000051">
    <property type="term" value="P:negative regulation of non-canonical Wnt signaling pathway"/>
    <property type="evidence" value="ECO:0000266"/>
    <property type="project" value="RGD"/>
</dbReference>
<dbReference type="GO" id="GO:0035567">
    <property type="term" value="P:non-canonical Wnt signaling pathway"/>
    <property type="evidence" value="ECO:0000266"/>
    <property type="project" value="RGD"/>
</dbReference>
<dbReference type="GO" id="GO:1905515">
    <property type="term" value="P:non-motile cilium assembly"/>
    <property type="evidence" value="ECO:0000266"/>
    <property type="project" value="RGD"/>
</dbReference>
<dbReference type="GO" id="GO:0071895">
    <property type="term" value="P:odontoblast differentiation"/>
    <property type="evidence" value="ECO:0000266"/>
    <property type="project" value="RGD"/>
</dbReference>
<dbReference type="GO" id="GO:0042476">
    <property type="term" value="P:odontogenesis"/>
    <property type="evidence" value="ECO:0000266"/>
    <property type="project" value="RGD"/>
</dbReference>
<dbReference type="GO" id="GO:0001503">
    <property type="term" value="P:ossification"/>
    <property type="evidence" value="ECO:0000266"/>
    <property type="project" value="RGD"/>
</dbReference>
<dbReference type="GO" id="GO:0001649">
    <property type="term" value="P:osteoblast differentiation"/>
    <property type="evidence" value="ECO:0000266"/>
    <property type="project" value="RGD"/>
</dbReference>
<dbReference type="GO" id="GO:0033687">
    <property type="term" value="P:osteoblast proliferation"/>
    <property type="evidence" value="ECO:0000266"/>
    <property type="project" value="RGD"/>
</dbReference>
<dbReference type="GO" id="GO:0030316">
    <property type="term" value="P:osteoclast differentiation"/>
    <property type="evidence" value="ECO:0000266"/>
    <property type="project" value="RGD"/>
</dbReference>
<dbReference type="GO" id="GO:0043491">
    <property type="term" value="P:phosphatidylinositol 3-kinase/protein kinase B signal transduction"/>
    <property type="evidence" value="ECO:0000266"/>
    <property type="project" value="RGD"/>
</dbReference>
<dbReference type="GO" id="GO:0010498">
    <property type="term" value="P:proteasomal protein catabolic process"/>
    <property type="evidence" value="ECO:0000266"/>
    <property type="project" value="RGD"/>
</dbReference>
<dbReference type="GO" id="GO:0050821">
    <property type="term" value="P:protein stabilization"/>
    <property type="evidence" value="ECO:0000266"/>
    <property type="project" value="RGD"/>
</dbReference>
<dbReference type="GO" id="GO:0016567">
    <property type="term" value="P:protein ubiquitination"/>
    <property type="evidence" value="ECO:0000266"/>
    <property type="project" value="RGD"/>
</dbReference>
<dbReference type="GO" id="GO:0097500">
    <property type="term" value="P:receptor localization to non-motile cilium"/>
    <property type="evidence" value="ECO:0000266"/>
    <property type="project" value="RGD"/>
</dbReference>
<dbReference type="GO" id="GO:1902140">
    <property type="term" value="P:response to inositol"/>
    <property type="evidence" value="ECO:0000266"/>
    <property type="project" value="RGD"/>
</dbReference>
<dbReference type="GO" id="GO:0001501">
    <property type="term" value="P:skeletal system development"/>
    <property type="evidence" value="ECO:0000266"/>
    <property type="project" value="RGD"/>
</dbReference>
<dbReference type="GO" id="GO:0007224">
    <property type="term" value="P:smoothened signaling pathway"/>
    <property type="evidence" value="ECO:0000266"/>
    <property type="project" value="RGD"/>
</dbReference>
<dbReference type="GO" id="GO:0021510">
    <property type="term" value="P:spinal cord development"/>
    <property type="evidence" value="ECO:0000266"/>
    <property type="project" value="RGD"/>
</dbReference>
<dbReference type="GO" id="GO:0048863">
    <property type="term" value="P:stem cell differentiation"/>
    <property type="evidence" value="ECO:0000266"/>
    <property type="project" value="RGD"/>
</dbReference>
<dbReference type="GO" id="GO:0072089">
    <property type="term" value="P:stem cell proliferation"/>
    <property type="evidence" value="ECO:0000266"/>
    <property type="project" value="RGD"/>
</dbReference>
<dbReference type="GO" id="GO:0009888">
    <property type="term" value="P:tissue development"/>
    <property type="evidence" value="ECO:0000266"/>
    <property type="project" value="RGD"/>
</dbReference>
<dbReference type="GO" id="GO:0044691">
    <property type="term" value="P:tooth eruption"/>
    <property type="evidence" value="ECO:0000266"/>
    <property type="project" value="RGD"/>
</dbReference>
<dbReference type="FunFam" id="1.25.40.470:FF:000007">
    <property type="entry name" value="Intraflagellar transport 80 homolog (Chlamydomonas)"/>
    <property type="match status" value="1"/>
</dbReference>
<dbReference type="FunFam" id="2.130.10.10:FF:000298">
    <property type="entry name" value="Intraflagellar transport 80 homolog (Chlamydomonas)"/>
    <property type="match status" value="1"/>
</dbReference>
<dbReference type="FunFam" id="2.130.10.10:FF:000458">
    <property type="entry name" value="Intraflagellar transport 80 homolog (Chlamydomonas)"/>
    <property type="match status" value="1"/>
</dbReference>
<dbReference type="Gene3D" id="1.25.40.470">
    <property type="match status" value="1"/>
</dbReference>
<dbReference type="Gene3D" id="2.130.10.10">
    <property type="entry name" value="YVTN repeat-like/Quinoprotein amine dehydrogenase"/>
    <property type="match status" value="2"/>
</dbReference>
<dbReference type="InterPro" id="IPR056456">
    <property type="entry name" value="Beta-prop_IFT80_2nd"/>
</dbReference>
<dbReference type="InterPro" id="IPR056157">
    <property type="entry name" value="TPR_IFT80_172_dom"/>
</dbReference>
<dbReference type="InterPro" id="IPR015943">
    <property type="entry name" value="WD40/YVTN_repeat-like_dom_sf"/>
</dbReference>
<dbReference type="InterPro" id="IPR036322">
    <property type="entry name" value="WD40_repeat_dom_sf"/>
</dbReference>
<dbReference type="InterPro" id="IPR001680">
    <property type="entry name" value="WD40_rpt"/>
</dbReference>
<dbReference type="PANTHER" id="PTHR24098:SF11">
    <property type="entry name" value="INTRAFLAGELLAR TRANSPORT PROTEIN 80 HOMOLOG"/>
    <property type="match status" value="1"/>
</dbReference>
<dbReference type="PANTHER" id="PTHR24098">
    <property type="entry name" value="OUTER SEGMENT 5"/>
    <property type="match status" value="1"/>
</dbReference>
<dbReference type="Pfam" id="PF23335">
    <property type="entry name" value="Beta-prop_IFT80_2nd"/>
    <property type="match status" value="1"/>
</dbReference>
<dbReference type="Pfam" id="PF23387">
    <property type="entry name" value="TPR_IFT80_172"/>
    <property type="match status" value="1"/>
</dbReference>
<dbReference type="Pfam" id="PF00400">
    <property type="entry name" value="WD40"/>
    <property type="match status" value="3"/>
</dbReference>
<dbReference type="SMART" id="SM00320">
    <property type="entry name" value="WD40"/>
    <property type="match status" value="6"/>
</dbReference>
<dbReference type="SUPFAM" id="SSF50978">
    <property type="entry name" value="WD40 repeat-like"/>
    <property type="match status" value="2"/>
</dbReference>
<dbReference type="PROSITE" id="PS50082">
    <property type="entry name" value="WD_REPEATS_2"/>
    <property type="match status" value="2"/>
</dbReference>
<dbReference type="PROSITE" id="PS50294">
    <property type="entry name" value="WD_REPEATS_REGION"/>
    <property type="match status" value="2"/>
</dbReference>
<keyword id="KW-0966">Cell projection</keyword>
<keyword id="KW-0969">Cilium</keyword>
<keyword id="KW-0963">Cytoplasm</keyword>
<keyword id="KW-0206">Cytoskeleton</keyword>
<keyword id="KW-1185">Reference proteome</keyword>
<keyword id="KW-0677">Repeat</keyword>
<keyword id="KW-0853">WD repeat</keyword>